<organism>
    <name type="scientific">Synechococcus sp. (strain CC9902)</name>
    <dbReference type="NCBI Taxonomy" id="316279"/>
    <lineage>
        <taxon>Bacteria</taxon>
        <taxon>Bacillati</taxon>
        <taxon>Cyanobacteriota</taxon>
        <taxon>Cyanophyceae</taxon>
        <taxon>Synechococcales</taxon>
        <taxon>Synechococcaceae</taxon>
        <taxon>Synechococcus</taxon>
    </lineage>
</organism>
<accession>Q3AYC6</accession>
<reference key="1">
    <citation type="submission" date="2005-08" db="EMBL/GenBank/DDBJ databases">
        <title>Complete sequence of Synechococcus sp. CC9902.</title>
        <authorList>
            <person name="Copeland A."/>
            <person name="Lucas S."/>
            <person name="Lapidus A."/>
            <person name="Barry K."/>
            <person name="Detter J.C."/>
            <person name="Glavina T."/>
            <person name="Hammon N."/>
            <person name="Israni S."/>
            <person name="Pitluck S."/>
            <person name="Martinez M."/>
            <person name="Schmutz J."/>
            <person name="Larimer F."/>
            <person name="Land M."/>
            <person name="Kyrpides N."/>
            <person name="Ivanova N."/>
            <person name="Richardson P."/>
        </authorList>
    </citation>
    <scope>NUCLEOTIDE SEQUENCE [LARGE SCALE GENOMIC DNA]</scope>
    <source>
        <strain>CC9902</strain>
    </source>
</reference>
<proteinExistence type="inferred from homology"/>
<sequence>MAGLVPVPVSSAAATTSAPLAPVVLPKTSESEQLLKIRHSMSHVMAMAVQKLFPNAQVTIGPWTETGFYYDFDNPEPFTEDDLKAIKKEMGKIIGRKLPLERIEVSRDEAETRIKAQNEPYKLEILERLQEPITLYTLGDQWWDLCAGPHVENTKELHPKAFELESVAGAYWRGDETKAQLQRIYGTAWETPEQLAEHKRRKVEALRRDHRRLGKDLELFSIEDEAGAGLVFWHPRGARMRLLIEDFWRQAHFEGGYELLYTPHVADISLWKTSGHLDFYAESMFGPMQVDEREYQLKPMNCPFHVLTYASKLRSYRELPIRWAELGTVYRYERPGVMHGLMRVRGFTQDDAHVFCLPDQISDEILRILDLTERILSTFDFNHYEINLSTRPEKSIGSEAVWELATKGLTEALERKGWNFKIDEGGGAFYGPKIDLKIEDAIGRMWQCSTIQLDFNLPERFGLDYVAADGSKQQPIMIHRAIFGSLERFFGIMTENYAGDFPFWLAPEQIRLLPVTDDVQPYAEQVLNQLKTAGIRATIDQSGDRLGKIIRTGEQMKIPVLAVIGAKEAEQNAISLRSRRDGDLGVTSVDALLKAAQRANAERQPGLGLNP</sequence>
<comment type="function">
    <text evidence="1">Catalyzes the attachment of threonine to tRNA(Thr) in a two-step reaction: L-threonine is first activated by ATP to form Thr-AMP and then transferred to the acceptor end of tRNA(Thr). Also edits incorrectly charged L-seryl-tRNA(Thr).</text>
</comment>
<comment type="catalytic activity">
    <reaction evidence="1">
        <text>tRNA(Thr) + L-threonine + ATP = L-threonyl-tRNA(Thr) + AMP + diphosphate + H(+)</text>
        <dbReference type="Rhea" id="RHEA:24624"/>
        <dbReference type="Rhea" id="RHEA-COMP:9670"/>
        <dbReference type="Rhea" id="RHEA-COMP:9704"/>
        <dbReference type="ChEBI" id="CHEBI:15378"/>
        <dbReference type="ChEBI" id="CHEBI:30616"/>
        <dbReference type="ChEBI" id="CHEBI:33019"/>
        <dbReference type="ChEBI" id="CHEBI:57926"/>
        <dbReference type="ChEBI" id="CHEBI:78442"/>
        <dbReference type="ChEBI" id="CHEBI:78534"/>
        <dbReference type="ChEBI" id="CHEBI:456215"/>
        <dbReference type="EC" id="6.1.1.3"/>
    </reaction>
</comment>
<comment type="cofactor">
    <cofactor evidence="1">
        <name>Zn(2+)</name>
        <dbReference type="ChEBI" id="CHEBI:29105"/>
    </cofactor>
    <text evidence="1">Binds 1 zinc ion per subunit.</text>
</comment>
<comment type="subunit">
    <text evidence="1">Homodimer.</text>
</comment>
<comment type="subcellular location">
    <subcellularLocation>
        <location evidence="1">Cytoplasm</location>
    </subcellularLocation>
</comment>
<comment type="similarity">
    <text evidence="1">Belongs to the class-II aminoacyl-tRNA synthetase family.</text>
</comment>
<keyword id="KW-0030">Aminoacyl-tRNA synthetase</keyword>
<keyword id="KW-0067">ATP-binding</keyword>
<keyword id="KW-0963">Cytoplasm</keyword>
<keyword id="KW-0436">Ligase</keyword>
<keyword id="KW-0479">Metal-binding</keyword>
<keyword id="KW-0547">Nucleotide-binding</keyword>
<keyword id="KW-0648">Protein biosynthesis</keyword>
<keyword id="KW-1185">Reference proteome</keyword>
<keyword id="KW-0694">RNA-binding</keyword>
<keyword id="KW-0820">tRNA-binding</keyword>
<keyword id="KW-0862">Zinc</keyword>
<feature type="chain" id="PRO_1000020541" description="Threonine--tRNA ligase">
    <location>
        <begin position="1"/>
        <end position="611"/>
    </location>
</feature>
<feature type="region of interest" description="Catalytic" evidence="1">
    <location>
        <begin position="209"/>
        <end position="502"/>
    </location>
</feature>
<feature type="binding site" evidence="1">
    <location>
        <position position="302"/>
    </location>
    <ligand>
        <name>Zn(2+)</name>
        <dbReference type="ChEBI" id="CHEBI:29105"/>
    </ligand>
</feature>
<feature type="binding site" evidence="1">
    <location>
        <position position="353"/>
    </location>
    <ligand>
        <name>Zn(2+)</name>
        <dbReference type="ChEBI" id="CHEBI:29105"/>
    </ligand>
</feature>
<feature type="binding site" evidence="1">
    <location>
        <position position="479"/>
    </location>
    <ligand>
        <name>Zn(2+)</name>
        <dbReference type="ChEBI" id="CHEBI:29105"/>
    </ligand>
</feature>
<evidence type="ECO:0000255" key="1">
    <source>
        <dbReference type="HAMAP-Rule" id="MF_00184"/>
    </source>
</evidence>
<protein>
    <recommendedName>
        <fullName evidence="1">Threonine--tRNA ligase</fullName>
        <ecNumber evidence="1">6.1.1.3</ecNumber>
    </recommendedName>
    <alternativeName>
        <fullName evidence="1">Threonyl-tRNA synthetase</fullName>
        <shortName evidence="1">ThrRS</shortName>
    </alternativeName>
</protein>
<dbReference type="EC" id="6.1.1.3" evidence="1"/>
<dbReference type="EMBL" id="CP000097">
    <property type="protein sequence ID" value="ABB25901.1"/>
    <property type="molecule type" value="Genomic_DNA"/>
</dbReference>
<dbReference type="RefSeq" id="WP_011359737.1">
    <property type="nucleotide sequence ID" value="NC_007513.1"/>
</dbReference>
<dbReference type="SMR" id="Q3AYC6"/>
<dbReference type="STRING" id="316279.Syncc9902_0935"/>
<dbReference type="KEGG" id="sye:Syncc9902_0935"/>
<dbReference type="eggNOG" id="COG0441">
    <property type="taxonomic scope" value="Bacteria"/>
</dbReference>
<dbReference type="HOGENOM" id="CLU_008554_3_1_3"/>
<dbReference type="OrthoDB" id="9802304at2"/>
<dbReference type="Proteomes" id="UP000002712">
    <property type="component" value="Chromosome"/>
</dbReference>
<dbReference type="GO" id="GO:0005737">
    <property type="term" value="C:cytoplasm"/>
    <property type="evidence" value="ECO:0007669"/>
    <property type="project" value="UniProtKB-SubCell"/>
</dbReference>
<dbReference type="GO" id="GO:0005524">
    <property type="term" value="F:ATP binding"/>
    <property type="evidence" value="ECO:0007669"/>
    <property type="project" value="UniProtKB-UniRule"/>
</dbReference>
<dbReference type="GO" id="GO:0046872">
    <property type="term" value="F:metal ion binding"/>
    <property type="evidence" value="ECO:0007669"/>
    <property type="project" value="UniProtKB-KW"/>
</dbReference>
<dbReference type="GO" id="GO:0004829">
    <property type="term" value="F:threonine-tRNA ligase activity"/>
    <property type="evidence" value="ECO:0007669"/>
    <property type="project" value="UniProtKB-UniRule"/>
</dbReference>
<dbReference type="GO" id="GO:0000049">
    <property type="term" value="F:tRNA binding"/>
    <property type="evidence" value="ECO:0007669"/>
    <property type="project" value="UniProtKB-KW"/>
</dbReference>
<dbReference type="GO" id="GO:0006435">
    <property type="term" value="P:threonyl-tRNA aminoacylation"/>
    <property type="evidence" value="ECO:0007669"/>
    <property type="project" value="UniProtKB-UniRule"/>
</dbReference>
<dbReference type="CDD" id="cd00860">
    <property type="entry name" value="ThrRS_anticodon"/>
    <property type="match status" value="1"/>
</dbReference>
<dbReference type="CDD" id="cd00771">
    <property type="entry name" value="ThrRS_core"/>
    <property type="match status" value="1"/>
</dbReference>
<dbReference type="FunFam" id="3.30.54.20:FF:000002">
    <property type="entry name" value="Threonine--tRNA ligase"/>
    <property type="match status" value="1"/>
</dbReference>
<dbReference type="FunFam" id="3.30.930.10:FF:000002">
    <property type="entry name" value="Threonine--tRNA ligase"/>
    <property type="match status" value="1"/>
</dbReference>
<dbReference type="FunFam" id="3.40.50.800:FF:000001">
    <property type="entry name" value="Threonine--tRNA ligase"/>
    <property type="match status" value="1"/>
</dbReference>
<dbReference type="Gene3D" id="3.30.54.20">
    <property type="match status" value="1"/>
</dbReference>
<dbReference type="Gene3D" id="3.40.50.800">
    <property type="entry name" value="Anticodon-binding domain"/>
    <property type="match status" value="1"/>
</dbReference>
<dbReference type="Gene3D" id="3.30.930.10">
    <property type="entry name" value="Bira Bifunctional Protein, Domain 2"/>
    <property type="match status" value="1"/>
</dbReference>
<dbReference type="Gene3D" id="3.30.980.10">
    <property type="entry name" value="Threonyl-trna Synthetase, Chain A, domain 2"/>
    <property type="match status" value="1"/>
</dbReference>
<dbReference type="HAMAP" id="MF_00184">
    <property type="entry name" value="Thr_tRNA_synth"/>
    <property type="match status" value="1"/>
</dbReference>
<dbReference type="InterPro" id="IPR002314">
    <property type="entry name" value="aa-tRNA-synt_IIb"/>
</dbReference>
<dbReference type="InterPro" id="IPR006195">
    <property type="entry name" value="aa-tRNA-synth_II"/>
</dbReference>
<dbReference type="InterPro" id="IPR045864">
    <property type="entry name" value="aa-tRNA-synth_II/BPL/LPL"/>
</dbReference>
<dbReference type="InterPro" id="IPR004154">
    <property type="entry name" value="Anticodon-bd"/>
</dbReference>
<dbReference type="InterPro" id="IPR036621">
    <property type="entry name" value="Anticodon-bd_dom_sf"/>
</dbReference>
<dbReference type="InterPro" id="IPR002320">
    <property type="entry name" value="Thr-tRNA-ligase_IIa"/>
</dbReference>
<dbReference type="InterPro" id="IPR018163">
    <property type="entry name" value="Thr/Ala-tRNA-synth_IIc_edit"/>
</dbReference>
<dbReference type="InterPro" id="IPR047246">
    <property type="entry name" value="ThrRS_anticodon"/>
</dbReference>
<dbReference type="InterPro" id="IPR033728">
    <property type="entry name" value="ThrRS_core"/>
</dbReference>
<dbReference type="InterPro" id="IPR012947">
    <property type="entry name" value="tRNA_SAD"/>
</dbReference>
<dbReference type="NCBIfam" id="TIGR00418">
    <property type="entry name" value="thrS"/>
    <property type="match status" value="1"/>
</dbReference>
<dbReference type="PANTHER" id="PTHR11451:SF44">
    <property type="entry name" value="THREONINE--TRNA LIGASE, CHLOROPLASTIC_MITOCHONDRIAL 2"/>
    <property type="match status" value="1"/>
</dbReference>
<dbReference type="PANTHER" id="PTHR11451">
    <property type="entry name" value="THREONINE-TRNA LIGASE"/>
    <property type="match status" value="1"/>
</dbReference>
<dbReference type="Pfam" id="PF03129">
    <property type="entry name" value="HGTP_anticodon"/>
    <property type="match status" value="1"/>
</dbReference>
<dbReference type="Pfam" id="PF00587">
    <property type="entry name" value="tRNA-synt_2b"/>
    <property type="match status" value="1"/>
</dbReference>
<dbReference type="Pfam" id="PF07973">
    <property type="entry name" value="tRNA_SAD"/>
    <property type="match status" value="1"/>
</dbReference>
<dbReference type="PRINTS" id="PR01047">
    <property type="entry name" value="TRNASYNTHTHR"/>
</dbReference>
<dbReference type="SMART" id="SM00863">
    <property type="entry name" value="tRNA_SAD"/>
    <property type="match status" value="1"/>
</dbReference>
<dbReference type="SUPFAM" id="SSF52954">
    <property type="entry name" value="Class II aaRS ABD-related"/>
    <property type="match status" value="1"/>
</dbReference>
<dbReference type="SUPFAM" id="SSF55681">
    <property type="entry name" value="Class II aaRS and biotin synthetases"/>
    <property type="match status" value="1"/>
</dbReference>
<dbReference type="SUPFAM" id="SSF55186">
    <property type="entry name" value="ThrRS/AlaRS common domain"/>
    <property type="match status" value="1"/>
</dbReference>
<dbReference type="PROSITE" id="PS50862">
    <property type="entry name" value="AA_TRNA_LIGASE_II"/>
    <property type="match status" value="1"/>
</dbReference>
<gene>
    <name evidence="1" type="primary">thrS</name>
    <name type="ordered locus">Syncc9902_0935</name>
</gene>
<name>SYT_SYNS9</name>